<accession>A5PJN8</accession>
<gene>
    <name type="primary">SF3A2</name>
</gene>
<sequence length="477" mass="50612">MDFQHRPGGKTGSGGVASSSESNRDRRERLRQLALETIDINKDPYFMKNHLGSYECKLCLTLHNNEGSYLAHTQGKKHQTNLARRAAKEAKEAPAQPAPEKVKVEVKKFVKIGRPGYKVTKQRDTEMGQQSLLFQIDYPEIAEGIMPRHRFMSAYEQRIEPPDRRWQYLLMAAEPYETIAFKVPSREIDKAEGKFWTHWNRETKQFFLQFHFKMEKPPAPPSLPAGPPGVKRPPPPLMNGLPPRPPLPESLPPPPPGGLPLPPMPPSGPAPSGPPGPPQLPPPAPGVHPPAPVVHPPASGVHPPAPGVHPPAPGVHPPAPVVHPPASGVHPPAPGVHPPAPGVHPPAPGVHPPAPGVHPPPSAGVHPQAPVVHPPAPAVHPQAPGVHPTPAVHPQAPGVHPPAPGVHPPAPGIHPQPPGVHPPPPGVHPPAPGVHPQPPGVHPSNPGVHPPTPMPPMLRPPLPSEGPGNIPPPPPTN</sequence>
<organism>
    <name type="scientific">Bos taurus</name>
    <name type="common">Bovine</name>
    <dbReference type="NCBI Taxonomy" id="9913"/>
    <lineage>
        <taxon>Eukaryota</taxon>
        <taxon>Metazoa</taxon>
        <taxon>Chordata</taxon>
        <taxon>Craniata</taxon>
        <taxon>Vertebrata</taxon>
        <taxon>Euteleostomi</taxon>
        <taxon>Mammalia</taxon>
        <taxon>Eutheria</taxon>
        <taxon>Laurasiatheria</taxon>
        <taxon>Artiodactyla</taxon>
        <taxon>Ruminantia</taxon>
        <taxon>Pecora</taxon>
        <taxon>Bovidae</taxon>
        <taxon>Bovinae</taxon>
        <taxon>Bos</taxon>
    </lineage>
</organism>
<evidence type="ECO:0000250" key="1">
    <source>
        <dbReference type="UniProtKB" id="Q15428"/>
    </source>
</evidence>
<evidence type="ECO:0000250" key="2">
    <source>
        <dbReference type="UniProtKB" id="Q62203"/>
    </source>
</evidence>
<evidence type="ECO:0000255" key="3">
    <source>
        <dbReference type="PROSITE-ProRule" id="PRU00130"/>
    </source>
</evidence>
<evidence type="ECO:0000256" key="4">
    <source>
        <dbReference type="SAM" id="MobiDB-lite"/>
    </source>
</evidence>
<evidence type="ECO:0000305" key="5"/>
<reference key="1">
    <citation type="submission" date="2007-06" db="EMBL/GenBank/DDBJ databases">
        <authorList>
            <consortium name="NIH - Mammalian Gene Collection (MGC) project"/>
        </authorList>
    </citation>
    <scope>NUCLEOTIDE SEQUENCE [LARGE SCALE MRNA]</scope>
    <source>
        <strain>Hereford</strain>
        <tissue>Uterus</tissue>
    </source>
</reference>
<dbReference type="EMBL" id="BC142185">
    <property type="protein sequence ID" value="AAI42186.1"/>
    <property type="molecule type" value="mRNA"/>
</dbReference>
<dbReference type="RefSeq" id="NP_001092681.1">
    <property type="nucleotide sequence ID" value="NM_001099211.1"/>
</dbReference>
<dbReference type="RefSeq" id="XP_024850481.1">
    <property type="nucleotide sequence ID" value="XM_024994713.2"/>
</dbReference>
<dbReference type="SMR" id="A5PJN8"/>
<dbReference type="FunCoup" id="A5PJN8">
    <property type="interactions" value="1971"/>
</dbReference>
<dbReference type="STRING" id="9913.ENSBTAP00000062091"/>
<dbReference type="PaxDb" id="9913-ENSBTAP00000035656"/>
<dbReference type="PeptideAtlas" id="A5PJN8"/>
<dbReference type="GeneID" id="789082"/>
<dbReference type="KEGG" id="bta:789082"/>
<dbReference type="CTD" id="8175"/>
<dbReference type="VEuPathDB" id="HostDB:ENSBTAG00000025452"/>
<dbReference type="eggNOG" id="KOG0227">
    <property type="taxonomic scope" value="Eukaryota"/>
</dbReference>
<dbReference type="HOGENOM" id="CLU_050757_1_1_1"/>
<dbReference type="InParanoid" id="A5PJN8"/>
<dbReference type="OMA" id="MAPPHGM"/>
<dbReference type="OrthoDB" id="10250970at2759"/>
<dbReference type="Reactome" id="R-BTA-72163">
    <property type="pathway name" value="mRNA Splicing - Major Pathway"/>
</dbReference>
<dbReference type="Proteomes" id="UP000009136">
    <property type="component" value="Chromosome 7"/>
</dbReference>
<dbReference type="Bgee" id="ENSBTAG00000025452">
    <property type="expression patterns" value="Expressed in vas deferens and 105 other cell types or tissues"/>
</dbReference>
<dbReference type="GO" id="GO:0071013">
    <property type="term" value="C:catalytic step 2 spliceosome"/>
    <property type="evidence" value="ECO:0000318"/>
    <property type="project" value="GO_Central"/>
</dbReference>
<dbReference type="GO" id="GO:0005634">
    <property type="term" value="C:nucleus"/>
    <property type="evidence" value="ECO:0000250"/>
    <property type="project" value="UniProtKB"/>
</dbReference>
<dbReference type="GO" id="GO:0005686">
    <property type="term" value="C:U2 snRNP"/>
    <property type="evidence" value="ECO:0000250"/>
    <property type="project" value="UniProtKB"/>
</dbReference>
<dbReference type="GO" id="GO:0071005">
    <property type="term" value="C:U2-type precatalytic spliceosome"/>
    <property type="evidence" value="ECO:0000250"/>
    <property type="project" value="UniProtKB"/>
</dbReference>
<dbReference type="GO" id="GO:0071004">
    <property type="term" value="C:U2-type prespliceosome"/>
    <property type="evidence" value="ECO:0000318"/>
    <property type="project" value="GO_Central"/>
</dbReference>
<dbReference type="GO" id="GO:0003676">
    <property type="term" value="F:nucleic acid binding"/>
    <property type="evidence" value="ECO:0007669"/>
    <property type="project" value="InterPro"/>
</dbReference>
<dbReference type="GO" id="GO:0008270">
    <property type="term" value="F:zinc ion binding"/>
    <property type="evidence" value="ECO:0007669"/>
    <property type="project" value="UniProtKB-KW"/>
</dbReference>
<dbReference type="GO" id="GO:0000398">
    <property type="term" value="P:mRNA splicing, via spliceosome"/>
    <property type="evidence" value="ECO:0000250"/>
    <property type="project" value="UniProtKB"/>
</dbReference>
<dbReference type="GO" id="GO:0000245">
    <property type="term" value="P:spliceosomal complex assembly"/>
    <property type="evidence" value="ECO:0000318"/>
    <property type="project" value="GO_Central"/>
</dbReference>
<dbReference type="GO" id="GO:1903241">
    <property type="term" value="P:U2-type prespliceosome assembly"/>
    <property type="evidence" value="ECO:0000250"/>
    <property type="project" value="UniProtKB"/>
</dbReference>
<dbReference type="FunFam" id="3.30.160.60:FF:001216">
    <property type="entry name" value="Splicing factor 3A subunit 2"/>
    <property type="match status" value="1"/>
</dbReference>
<dbReference type="FunFam" id="2.60.40.2690:FF:000001">
    <property type="entry name" value="Splicing factor 3a, subunit 2"/>
    <property type="match status" value="1"/>
</dbReference>
<dbReference type="Gene3D" id="2.60.40.2690">
    <property type="match status" value="1"/>
</dbReference>
<dbReference type="InterPro" id="IPR000690">
    <property type="entry name" value="Matrin/U1-C_Znf_C2H2"/>
</dbReference>
<dbReference type="InterPro" id="IPR003604">
    <property type="entry name" value="Matrin/U1-like-C_Znf_C2H2"/>
</dbReference>
<dbReference type="InterPro" id="IPR052092">
    <property type="entry name" value="SF3A2"/>
</dbReference>
<dbReference type="InterPro" id="IPR031781">
    <property type="entry name" value="SF3A2_dom"/>
</dbReference>
<dbReference type="InterPro" id="IPR036236">
    <property type="entry name" value="Znf_C2H2_sf"/>
</dbReference>
<dbReference type="InterPro" id="IPR013087">
    <property type="entry name" value="Znf_C2H2_type"/>
</dbReference>
<dbReference type="PANTHER" id="PTHR23205">
    <property type="entry name" value="SPLICING FACTOR 3A SUBUNIT 2"/>
    <property type="match status" value="1"/>
</dbReference>
<dbReference type="PANTHER" id="PTHR23205:SF0">
    <property type="entry name" value="SPLICING FACTOR 3A SUBUNIT 2"/>
    <property type="match status" value="1"/>
</dbReference>
<dbReference type="Pfam" id="PF16835">
    <property type="entry name" value="SF3A2"/>
    <property type="match status" value="1"/>
</dbReference>
<dbReference type="Pfam" id="PF12874">
    <property type="entry name" value="zf-met"/>
    <property type="match status" value="1"/>
</dbReference>
<dbReference type="SMART" id="SM01050">
    <property type="entry name" value="CactinC_cactus"/>
    <property type="match status" value="1"/>
</dbReference>
<dbReference type="SMART" id="SM00451">
    <property type="entry name" value="ZnF_U1"/>
    <property type="match status" value="1"/>
</dbReference>
<dbReference type="SUPFAM" id="SSF57667">
    <property type="entry name" value="beta-beta-alpha zinc fingers"/>
    <property type="match status" value="1"/>
</dbReference>
<dbReference type="PROSITE" id="PS50171">
    <property type="entry name" value="ZF_MATRIN"/>
    <property type="match status" value="1"/>
</dbReference>
<comment type="function">
    <text evidence="1">Component of the 17S U2 SnRNP complex of the spliceosome, a large ribonucleoprotein complex that removes introns from transcribed pre-mRNAs. The 17S U2 SnRNP complex (1) directly participates in early spliceosome assembly and (2) mediates recognition of the intron branch site during pre-mRNA splicing by promoting the selection of the pre-mRNA branch-site adenosine, the nucleophile for the first step of splicing. Within the 17S U2 SnRNP complex, SF3A2 is part of the SF3A subcomplex that contributes to the assembly of the 17S U2 snRNP, and the subsequent assembly of the pre-spliceosome 'E' complex and the pre-catalytic spliceosome 'A' complex. Involved in pre-mRNA splicing as a component of pre-catalytic spliceosome 'B' complexes, including the Bact complex. Interacts directly with the duplex formed by U2 snRNA and the intron.</text>
</comment>
<comment type="subunit">
    <text evidence="1">Component of the 17S U2 SnRNP complex, a ribonucleoprotein complex that contains small nuclear RNA (snRNA) U2 and a number of specific proteins. Part of the SF3A subcomplex of the 17S U2 SnRNP complex which is composed of three subunits; SF3A3/SAP61, SF3A2/SAP62 and SF3A1/SAP114. SF3A associates with the splicing factor SF3B and a 12S RNA unit to form the mature 17S U2 small nuclear ribonucleoprotein complex (17S U2 snRNP). Identified in the spliceosome 'E' complex, a precursor of the spliceosome 'A' complex. Identified in the spliceosome 'A' and 'B' complexes. Identified in the spliceosome 'C' complex. Interacts with HTATSF1.</text>
</comment>
<comment type="subcellular location">
    <subcellularLocation>
        <location evidence="3">Nucleus</location>
    </subcellularLocation>
</comment>
<comment type="similarity">
    <text evidence="5">Belongs to the SF3A2 family.</text>
</comment>
<feature type="chain" id="PRO_0000326551" description="Splicing factor 3A subunit 2">
    <location>
        <begin position="1"/>
        <end position="477"/>
    </location>
</feature>
<feature type="zinc finger region" description="Matrin-type" evidence="3">
    <location>
        <begin position="54"/>
        <end position="84"/>
    </location>
</feature>
<feature type="region of interest" description="Disordered" evidence="4">
    <location>
        <begin position="1"/>
        <end position="27"/>
    </location>
</feature>
<feature type="region of interest" description="Disordered" evidence="4">
    <location>
        <begin position="217"/>
        <end position="477"/>
    </location>
</feature>
<feature type="compositionally biased region" description="Pro residues" evidence="4">
    <location>
        <begin position="217"/>
        <end position="295"/>
    </location>
</feature>
<feature type="compositionally biased region" description="Pro residues" evidence="4">
    <location>
        <begin position="303"/>
        <end position="323"/>
    </location>
</feature>
<feature type="compositionally biased region" description="Pro residues" evidence="4">
    <location>
        <begin position="331"/>
        <end position="362"/>
    </location>
</feature>
<feature type="compositionally biased region" description="Low complexity" evidence="4">
    <location>
        <begin position="379"/>
        <end position="398"/>
    </location>
</feature>
<feature type="compositionally biased region" description="Pro residues" evidence="4">
    <location>
        <begin position="399"/>
        <end position="441"/>
    </location>
</feature>
<feature type="compositionally biased region" description="Pro residues" evidence="4">
    <location>
        <begin position="448"/>
        <end position="477"/>
    </location>
</feature>
<feature type="modified residue" description="N-acetylmethionine" evidence="1">
    <location>
        <position position="1"/>
    </location>
</feature>
<feature type="modified residue" description="N6-acetyllysine" evidence="2">
    <location>
        <position position="10"/>
    </location>
</feature>
<feature type="modified residue" description="Phosphoserine" evidence="1">
    <location>
        <position position="153"/>
    </location>
</feature>
<keyword id="KW-0007">Acetylation</keyword>
<keyword id="KW-0479">Metal-binding</keyword>
<keyword id="KW-0507">mRNA processing</keyword>
<keyword id="KW-0508">mRNA splicing</keyword>
<keyword id="KW-0539">Nucleus</keyword>
<keyword id="KW-0597">Phosphoprotein</keyword>
<keyword id="KW-1185">Reference proteome</keyword>
<keyword id="KW-0677">Repeat</keyword>
<keyword id="KW-0747">Spliceosome</keyword>
<keyword id="KW-0862">Zinc</keyword>
<keyword id="KW-0863">Zinc-finger</keyword>
<proteinExistence type="evidence at transcript level"/>
<protein>
    <recommendedName>
        <fullName>Splicing factor 3A subunit 2</fullName>
    </recommendedName>
</protein>
<name>SF3A2_BOVIN</name>